<organism>
    <name type="scientific">Bacillus cytotoxicus (strain DSM 22905 / CIP 110041 / 391-98 / NVH 391-98)</name>
    <dbReference type="NCBI Taxonomy" id="315749"/>
    <lineage>
        <taxon>Bacteria</taxon>
        <taxon>Bacillati</taxon>
        <taxon>Bacillota</taxon>
        <taxon>Bacilli</taxon>
        <taxon>Bacillales</taxon>
        <taxon>Bacillaceae</taxon>
        <taxon>Bacillus</taxon>
        <taxon>Bacillus cereus group</taxon>
    </lineage>
</organism>
<reference key="1">
    <citation type="journal article" date="2008" name="Chem. Biol. Interact.">
        <title>Extending the Bacillus cereus group genomics to putative food-borne pathogens of different toxicity.</title>
        <authorList>
            <person name="Lapidus A."/>
            <person name="Goltsman E."/>
            <person name="Auger S."/>
            <person name="Galleron N."/>
            <person name="Segurens B."/>
            <person name="Dossat C."/>
            <person name="Land M.L."/>
            <person name="Broussolle V."/>
            <person name="Brillard J."/>
            <person name="Guinebretiere M.-H."/>
            <person name="Sanchis V."/>
            <person name="Nguen-the C."/>
            <person name="Lereclus D."/>
            <person name="Richardson P."/>
            <person name="Wincker P."/>
            <person name="Weissenbach J."/>
            <person name="Ehrlich S.D."/>
            <person name="Sorokin A."/>
        </authorList>
    </citation>
    <scope>NUCLEOTIDE SEQUENCE [LARGE SCALE GENOMIC DNA]</scope>
    <source>
        <strain>DSM 22905 / CIP 110041 / 391-98 / NVH 391-98</strain>
    </source>
</reference>
<protein>
    <recommendedName>
        <fullName evidence="1">Processive diacylglycerol beta-glucosyltransferase</fullName>
        <ecNumber>2.4.1.315</ecNumber>
    </recommendedName>
    <alternativeName>
        <fullName evidence="1">Beta-diglucosyldiacylglycerol synthase</fullName>
        <shortName evidence="1">Beta-DGS</shortName>
        <shortName evidence="1">DGlcDAG synthase</shortName>
        <shortName evidence="1">Glc2-DAG synthase</shortName>
    </alternativeName>
    <alternativeName>
        <fullName evidence="1">Beta-gentiobiosyldiacylglycerol synthase</fullName>
    </alternativeName>
    <alternativeName>
        <fullName evidence="1">Beta-monoglucosyldiacylglycerol synthase</fullName>
        <shortName evidence="1">Beta-MGS</shortName>
        <shortName evidence="1">MGlcDAG synthase</shortName>
    </alternativeName>
    <alternativeName>
        <fullName evidence="1">Beta-triglucosyldiacylglycerol synthase</fullName>
        <shortName evidence="1">TGlcDAG synthase</shortName>
    </alternativeName>
    <alternativeName>
        <fullName>Diglucosyl diacylglycerol synthase (1,6-linking)</fullName>
    </alternativeName>
    <alternativeName>
        <fullName evidence="1">Glucosyl-beta-1,6-glucosyldiacylglycerol synthase</fullName>
    </alternativeName>
    <alternativeName>
        <fullName evidence="1">UDP glucosyltransferase</fullName>
    </alternativeName>
    <alternativeName>
        <fullName evidence="1">UDP-glucose:1,2-diacylglycerol-3-beta-D-glucosyltransferase</fullName>
    </alternativeName>
</protein>
<keyword id="KW-0119">Carbohydrate metabolism</keyword>
<keyword id="KW-1003">Cell membrane</keyword>
<keyword id="KW-0328">Glycosyltransferase</keyword>
<keyword id="KW-0444">Lipid biosynthesis</keyword>
<keyword id="KW-0443">Lipid metabolism</keyword>
<keyword id="KW-0472">Membrane</keyword>
<keyword id="KW-0808">Transferase</keyword>
<name>UGTP_BACCN</name>
<feature type="chain" id="PRO_1000085890" description="Processive diacylglycerol beta-glucosyltransferase">
    <location>
        <begin position="1"/>
        <end position="388"/>
    </location>
</feature>
<proteinExistence type="inferred from homology"/>
<gene>
    <name evidence="1" type="primary">ugtP</name>
    <name type="ordered locus">Bcer98_0433</name>
</gene>
<sequence>MIKNPKVLILTAHYGNGHVQVAKTLEQAFHQKGIEDVIVCDLFGESHPVITDITKYLYLKSYTIGKELYRLFYYGVEKIYDKKIASWYANFGRKRLKALLHTEKPDIVINTFPIIAVPELKKQTGFSIPVYNVLTDFCLHKIWIHREVDRYFVATDHVKQVMIEIGVPAERIVETGIPIRKNFELTMNSELIYNKYQLSREKKILLIVAGAHGVLGNVKDLCASFMSVPNLQVAVVCGKNDALKQELLKLQEQNSEALKVFGYIENIDELFRVTSCMITKPGGITLSEAAALQVPVILYKPVPGQENENAIYFESKGAAVVIREDAEIFEKTKALLEDDRKLLQMKEAMGSIYRPEPAAHIVDVILEENHAQTNHVPMKSPALAQSFT</sequence>
<accession>A7GKY0</accession>
<dbReference type="EC" id="2.4.1.315"/>
<dbReference type="EMBL" id="CP000764">
    <property type="protein sequence ID" value="ABS20788.1"/>
    <property type="molecule type" value="Genomic_DNA"/>
</dbReference>
<dbReference type="RefSeq" id="WP_011983545.1">
    <property type="nucleotide sequence ID" value="NC_009674.1"/>
</dbReference>
<dbReference type="SMR" id="A7GKY0"/>
<dbReference type="STRING" id="315749.Bcer98_0433"/>
<dbReference type="CAZy" id="GT28">
    <property type="family name" value="Glycosyltransferase Family 28"/>
</dbReference>
<dbReference type="GeneID" id="33895781"/>
<dbReference type="KEGG" id="bcy:Bcer98_0433"/>
<dbReference type="eggNOG" id="COG0707">
    <property type="taxonomic scope" value="Bacteria"/>
</dbReference>
<dbReference type="HOGENOM" id="CLU_028367_0_1_9"/>
<dbReference type="OrthoDB" id="9815663at2"/>
<dbReference type="UniPathway" id="UPA00894"/>
<dbReference type="Proteomes" id="UP000002300">
    <property type="component" value="Chromosome"/>
</dbReference>
<dbReference type="GO" id="GO:0005886">
    <property type="term" value="C:plasma membrane"/>
    <property type="evidence" value="ECO:0007669"/>
    <property type="project" value="UniProtKB-SubCell"/>
</dbReference>
<dbReference type="GO" id="GO:0047228">
    <property type="term" value="F:1,2-diacylglycerol 3-glucosyltransferase activity"/>
    <property type="evidence" value="ECO:0007669"/>
    <property type="project" value="UniProtKB-UniRule"/>
</dbReference>
<dbReference type="GO" id="GO:0009246">
    <property type="term" value="P:enterobacterial common antigen biosynthetic process"/>
    <property type="evidence" value="ECO:0007669"/>
    <property type="project" value="UniProtKB-UniPathway"/>
</dbReference>
<dbReference type="GO" id="GO:0009247">
    <property type="term" value="P:glycolipid biosynthetic process"/>
    <property type="evidence" value="ECO:0007669"/>
    <property type="project" value="UniProtKB-UniRule"/>
</dbReference>
<dbReference type="GO" id="GO:0070395">
    <property type="term" value="P:lipoteichoic acid biosynthetic process"/>
    <property type="evidence" value="ECO:0007669"/>
    <property type="project" value="UniProtKB-UniRule"/>
</dbReference>
<dbReference type="CDD" id="cd17507">
    <property type="entry name" value="GT28_Beta-DGS-like"/>
    <property type="match status" value="1"/>
</dbReference>
<dbReference type="Gene3D" id="3.40.50.2000">
    <property type="entry name" value="Glycogen Phosphorylase B"/>
    <property type="match status" value="1"/>
</dbReference>
<dbReference type="HAMAP" id="MF_01280">
    <property type="entry name" value="Diacylglyc_glucosyltr"/>
    <property type="match status" value="1"/>
</dbReference>
<dbReference type="InterPro" id="IPR009695">
    <property type="entry name" value="Diacylglyc_glucosyltr_N"/>
</dbReference>
<dbReference type="InterPro" id="IPR007235">
    <property type="entry name" value="Glyco_trans_28_C"/>
</dbReference>
<dbReference type="InterPro" id="IPR050519">
    <property type="entry name" value="Glycosyltransf_28_UgtP"/>
</dbReference>
<dbReference type="InterPro" id="IPR023589">
    <property type="entry name" value="Pro_diacylglycrl_glcsylTrfase"/>
</dbReference>
<dbReference type="NCBIfam" id="NF010135">
    <property type="entry name" value="PRK13609.1"/>
    <property type="match status" value="1"/>
</dbReference>
<dbReference type="PANTHER" id="PTHR43025">
    <property type="entry name" value="MONOGALACTOSYLDIACYLGLYCEROL SYNTHASE"/>
    <property type="match status" value="1"/>
</dbReference>
<dbReference type="PANTHER" id="PTHR43025:SF3">
    <property type="entry name" value="MONOGALACTOSYLDIACYLGLYCEROL SYNTHASE 1, CHLOROPLASTIC"/>
    <property type="match status" value="1"/>
</dbReference>
<dbReference type="Pfam" id="PF04101">
    <property type="entry name" value="Glyco_tran_28_C"/>
    <property type="match status" value="1"/>
</dbReference>
<dbReference type="Pfam" id="PF06925">
    <property type="entry name" value="MGDG_synth"/>
    <property type="match status" value="1"/>
</dbReference>
<dbReference type="SUPFAM" id="SSF53756">
    <property type="entry name" value="UDP-Glycosyltransferase/glycogen phosphorylase"/>
    <property type="match status" value="1"/>
</dbReference>
<evidence type="ECO:0000255" key="1">
    <source>
        <dbReference type="HAMAP-Rule" id="MF_01280"/>
    </source>
</evidence>
<comment type="function">
    <text evidence="1">Processive glucosyltransferase involved in the biosynthesis of both the bilayer- and non-bilayer-forming membrane glucolipids. Is able to successively transfer up to three glucosyl residues to diacylglycerol (DAG), thereby catalyzing the formation of beta-monoglucosyl-DAG (3-O-(beta-D-glucopyranosyl)-1,2-diacyl-sn-glycerol), beta-diglucosyl-DAG (3-O-(beta-D-glucopyranosyl-beta-(1-&gt;6)-D-glucopyranosyl)-1,2-diacyl-sn-glycerol) and beta-triglucosyl-DAG (3-O-(beta-D-glucopyranosyl-beta-(1-&gt;6)-D-glucopyranosyl-beta-(1-&gt;6)-D-glucopyranosyl)-1,2-diacyl-sn-glycerol). Beta-diglucosyl-DAG is the predominant glycolipid found in Bacillales and is also used as a membrane anchor for lipoteichoic acid (LTA).</text>
</comment>
<comment type="catalytic activity">
    <reaction>
        <text>a 1,2-diacyl-3-O-(beta-D-glucopyranosyl)-sn-glycerol + UDP-alpha-D-glucose = a 1,2-diacyl-3-O-(beta-D-Glc-(1-&gt;6)-beta-D-Glc)-sn-glycerol + UDP + H(+)</text>
        <dbReference type="Rhea" id="RHEA:39031"/>
        <dbReference type="ChEBI" id="CHEBI:15378"/>
        <dbReference type="ChEBI" id="CHEBI:58223"/>
        <dbReference type="ChEBI" id="CHEBI:58885"/>
        <dbReference type="ChEBI" id="CHEBI:75799"/>
        <dbReference type="ChEBI" id="CHEBI:76264"/>
        <dbReference type="EC" id="2.4.1.315"/>
    </reaction>
</comment>
<comment type="catalytic activity">
    <reaction>
        <text>a 1,2-diacyl-3-O-(beta-D-Glc-(1-&gt;6)-beta-D-Glc)-sn-glycerol + UDP-alpha-D-glucose = a 1,2-diacyl-3-O-(beta-D-Glc-(1-&gt;6)-beta-D-Glc-(1-&gt;6)-beta-D-Glc)-sn-glycerol + UDP + H(+)</text>
        <dbReference type="Rhea" id="RHEA:39027"/>
        <dbReference type="ChEBI" id="CHEBI:15378"/>
        <dbReference type="ChEBI" id="CHEBI:58223"/>
        <dbReference type="ChEBI" id="CHEBI:58885"/>
        <dbReference type="ChEBI" id="CHEBI:76264"/>
        <dbReference type="ChEBI" id="CHEBI:76265"/>
        <dbReference type="EC" id="2.4.1.315"/>
    </reaction>
</comment>
<comment type="catalytic activity">
    <reaction evidence="1">
        <text>a 1,2-diacyl-sn-glycerol + UDP-alpha-D-glucose = a 1,2-diacyl-3-O-(beta-D-glucopyranosyl)-sn-glycerol + UDP + H(+)</text>
        <dbReference type="Rhea" id="RHEA:17285"/>
        <dbReference type="ChEBI" id="CHEBI:15378"/>
        <dbReference type="ChEBI" id="CHEBI:17815"/>
        <dbReference type="ChEBI" id="CHEBI:58223"/>
        <dbReference type="ChEBI" id="CHEBI:58885"/>
        <dbReference type="ChEBI" id="CHEBI:75799"/>
    </reaction>
</comment>
<comment type="pathway">
    <text evidence="1">Glycolipid metabolism; diglucosyl-diacylglycerol biosynthesis.</text>
</comment>
<comment type="subcellular location">
    <subcellularLocation>
        <location evidence="1">Cell membrane</location>
    </subcellularLocation>
</comment>
<comment type="similarity">
    <text evidence="1">Belongs to the glycosyltransferase 28 family. UgtP subfamily.</text>
</comment>